<sequence>MEKAHADEFPLTTDSSEKQGVVCIFGTGDFGKSLGLKMLQCGYSIVFGSRNPQVSSLLPRGAEVLSYSEAASKSDIIILAMHREHYDSLTELVDYLKGKVLVDVSNNRKINQYPESNAEYLAQLEPGAHVVKAFNTISAWALQSGTLDASRQVFVCGNDSKAKQRVMDIARTLGLTPLDQGSLMAASEIENYPLQLFPMWRFPFYLSSVLCVFFFVYCAIREVIYPYVNGKTDATYRLAISIPNRVFPITALILLALVYLPGILAAILQLYRGTKYRRFPNWLDHWMLCRKQLGLVALGFAFLHVIYTLVIPIRYYVRWRLRNATITQALTNKDSPFITSYAWINDSYLALGILGFFLFLLLGITSLPSVSNMVNWREFRFVQSKLGYLTLVLCTAHTLVYGGKRFLSPSILRWSLPSAYILALVIPCAVLVLKCILIMPCIDKTLTRIRQGWERNSKYTQSALNGKSDI</sequence>
<name>STEA4_MOUSE</name>
<comment type="function">
    <text evidence="4 8 9 11">Integral membrane protein that functions as a NADPH-dependent ferric-chelate reductase, using NADPH from one side of the membrane to reduce a Fe(3+) chelate that is bound on the other side of the membrane (PubMed:16609065). Mediates sequential transmembrane electron transfer from NADPH to FAD and onto heme, and finally to the Fe(3+) chelate (By similarity). Can also reduce Cu(2+) to Cu(1+) (PubMed:16609065). Plays a role in systemic metabolic homeostasis, integrating inflammatory and metabolic responses (PubMed:17482547). Associated with obesity and insulin-resistance (By similarity). Involved in inflammatory arthritis, through the regulation of inflammatory cytokines (PubMed:19660107). Inhibits anchorage-independent cell proliferation (By similarity).</text>
</comment>
<comment type="catalytic activity">
    <reaction evidence="8">
        <text>2 Fe(2+) + NADP(+) + H(+) = 2 Fe(3+) + NADPH</text>
        <dbReference type="Rhea" id="RHEA:71767"/>
        <dbReference type="ChEBI" id="CHEBI:15378"/>
        <dbReference type="ChEBI" id="CHEBI:29033"/>
        <dbReference type="ChEBI" id="CHEBI:29034"/>
        <dbReference type="ChEBI" id="CHEBI:57783"/>
        <dbReference type="ChEBI" id="CHEBI:58349"/>
    </reaction>
    <physiologicalReaction direction="right-to-left" evidence="15">
        <dbReference type="Rhea" id="RHEA:71769"/>
    </physiologicalReaction>
</comment>
<comment type="catalytic activity">
    <reaction evidence="8">
        <text>2 Cu(+) + NADP(+) + H(+) = 2 Cu(2+) + NADPH</text>
        <dbReference type="Rhea" id="RHEA:71771"/>
        <dbReference type="ChEBI" id="CHEBI:15378"/>
        <dbReference type="ChEBI" id="CHEBI:29036"/>
        <dbReference type="ChEBI" id="CHEBI:49552"/>
        <dbReference type="ChEBI" id="CHEBI:57783"/>
        <dbReference type="ChEBI" id="CHEBI:58349"/>
    </reaction>
    <physiologicalReaction direction="right-to-left" evidence="15">
        <dbReference type="Rhea" id="RHEA:71773"/>
    </physiologicalReaction>
</comment>
<comment type="cofactor">
    <cofactor evidence="2">
        <name>FAD</name>
        <dbReference type="ChEBI" id="CHEBI:57692"/>
    </cofactor>
    <text evidence="2">Can also utilize the flavins FMN and riboflavin.</text>
</comment>
<comment type="cofactor">
    <cofactor evidence="4">
        <name>heme b</name>
        <dbReference type="ChEBI" id="CHEBI:60344"/>
    </cofactor>
</comment>
<comment type="subunit">
    <text evidence="4">Homotrimer. Interacts with PTK2/FAK1; the interaction may regulate PTK2 phosphorylation.</text>
</comment>
<comment type="subcellular location">
    <subcellularLocation>
        <location evidence="6 8">Cell membrane</location>
        <topology evidence="4">Multi-pass membrane protein</topology>
    </subcellularLocation>
    <subcellularLocation>
        <location evidence="14">Golgi apparatus membrane</location>
        <topology evidence="4">Multi-pass membrane protein</topology>
    </subcellularLocation>
    <subcellularLocation>
        <location evidence="8">Early endosome membrane</location>
        <topology evidence="4">Multi-pass membrane protein</topology>
    </subcellularLocation>
</comment>
<comment type="tissue specificity">
    <text evidence="7 11">Expressed in white and brown adipose tissues cells, as well as in muscle and liver cells. Detected in joints and spleens of arthritic mice.</text>
</comment>
<comment type="induction">
    <text evidence="6 7 9 10 11">By Tnfa (TNF-alpha), by Il6 in white and brown adipose tissue, and IL1B in white adipose tissue. Tnfa, Il6 and Il1b shows sinergistic stimulatory effects.</text>
</comment>
<comment type="disruption phenotype">
    <text evidence="9">Mice are viable and fertile, but exhibit overt inflammation with increased expression of Il6, Tnfa, Ccl2, haptoglobin and Socs3 in visceral adipose tissue as well as macrophage infiltration. They develop metabolic disease on regular diet with insulin resistance, glucose intolerance, mild hyperglycemia, dyslipidemia, and fatty liver disease. Adipocytes isolated from visceral fat exhibit severily defective glucose transport, with decreased expression of Slc2a4, Adipoq, Fas and Pparg. Glucose disposal is lower in response to insulin stimulation and hepatic glucose production is higher, confirming systemic and hepatic insulin-resistance.</text>
</comment>
<comment type="similarity">
    <text evidence="13">Belongs to the STEAP family.</text>
</comment>
<comment type="sequence caution" evidence="13">
    <conflict type="frameshift">
        <sequence resource="EMBL-CDS" id="AAK40270"/>
    </conflict>
</comment>
<protein>
    <recommendedName>
        <fullName>Metalloreductase STEAP4</fullName>
        <ecNumber>1.16.1.-</ecNumber>
    </recommendedName>
    <alternativeName>
        <fullName>Dudulin-4</fullName>
    </alternativeName>
    <alternativeName>
        <fullName>Six-transmembrane epithelial antigen of prostate 4</fullName>
    </alternativeName>
    <alternativeName>
        <fullName>Tumor necrosis factor-alpha-induced adipose-related protein</fullName>
    </alternativeName>
</protein>
<organism>
    <name type="scientific">Mus musculus</name>
    <name type="common">Mouse</name>
    <dbReference type="NCBI Taxonomy" id="10090"/>
    <lineage>
        <taxon>Eukaryota</taxon>
        <taxon>Metazoa</taxon>
        <taxon>Chordata</taxon>
        <taxon>Craniata</taxon>
        <taxon>Vertebrata</taxon>
        <taxon>Euteleostomi</taxon>
        <taxon>Mammalia</taxon>
        <taxon>Eutheria</taxon>
        <taxon>Euarchontoglires</taxon>
        <taxon>Glires</taxon>
        <taxon>Rodentia</taxon>
        <taxon>Myomorpha</taxon>
        <taxon>Muroidea</taxon>
        <taxon>Muridae</taxon>
        <taxon>Murinae</taxon>
        <taxon>Mus</taxon>
        <taxon>Mus</taxon>
    </lineage>
</organism>
<feature type="chain" id="PRO_0000285175" description="Metalloreductase STEAP4">
    <location>
        <begin position="1"/>
        <end position="470"/>
    </location>
</feature>
<feature type="transmembrane region" description="Helical" evidence="4">
    <location>
        <begin position="202"/>
        <end position="224"/>
    </location>
</feature>
<feature type="transmembrane region" description="Helical" evidence="4">
    <location>
        <begin position="236"/>
        <end position="256"/>
    </location>
</feature>
<feature type="transmembrane region" description="Helical" evidence="4">
    <location>
        <begin position="293"/>
        <end position="313"/>
    </location>
</feature>
<feature type="transmembrane region" description="Helical" evidence="4">
    <location>
        <begin position="342"/>
        <end position="362"/>
    </location>
</feature>
<feature type="transmembrane region" description="Helical" evidence="4">
    <location>
        <begin position="381"/>
        <end position="401"/>
    </location>
</feature>
<feature type="transmembrane region" description="Helical" evidence="4">
    <location>
        <begin position="419"/>
        <end position="439"/>
    </location>
</feature>
<feature type="domain" description="Ferric oxidoreductase" evidence="5">
    <location>
        <begin position="247"/>
        <end position="395"/>
    </location>
</feature>
<feature type="binding site" evidence="2">
    <location>
        <begin position="27"/>
        <end position="30"/>
    </location>
    <ligand>
        <name>NADP(+)</name>
        <dbReference type="ChEBI" id="CHEBI:58349"/>
    </ligand>
</feature>
<feature type="binding site" evidence="2">
    <location>
        <begin position="49"/>
        <end position="50"/>
    </location>
    <ligand>
        <name>NADP(+)</name>
        <dbReference type="ChEBI" id="CHEBI:58349"/>
    </ligand>
</feature>
<feature type="binding site" evidence="2">
    <location>
        <position position="67"/>
    </location>
    <ligand>
        <name>NADP(+)</name>
        <dbReference type="ChEBI" id="CHEBI:58349"/>
    </ligand>
</feature>
<feature type="binding site" evidence="2">
    <location>
        <begin position="81"/>
        <end position="85"/>
    </location>
    <ligand>
        <name>NADP(+)</name>
        <dbReference type="ChEBI" id="CHEBI:58349"/>
    </ligand>
</feature>
<feature type="binding site" evidence="2">
    <location>
        <position position="106"/>
    </location>
    <ligand>
        <name>NADP(+)</name>
        <dbReference type="ChEBI" id="CHEBI:58349"/>
    </ligand>
</feature>
<feature type="binding site" evidence="2">
    <location>
        <position position="139"/>
    </location>
    <ligand>
        <name>NADP(+)</name>
        <dbReference type="ChEBI" id="CHEBI:58349"/>
    </ligand>
</feature>
<feature type="binding site" evidence="4">
    <location>
        <position position="140"/>
    </location>
    <ligand>
        <name>FAD</name>
        <dbReference type="ChEBI" id="CHEBI:57692"/>
    </ligand>
</feature>
<feature type="binding site" evidence="4">
    <location>
        <position position="148"/>
    </location>
    <ligand>
        <name>FAD</name>
        <dbReference type="ChEBI" id="CHEBI:57692"/>
    </ligand>
</feature>
<feature type="binding site" evidence="2">
    <location>
        <position position="171"/>
    </location>
    <ligand>
        <name>NADP(+)</name>
        <dbReference type="ChEBI" id="CHEBI:58349"/>
    </ligand>
</feature>
<feature type="binding site" evidence="3">
    <location>
        <position position="217"/>
    </location>
    <ligand>
        <name>Fe(3+)</name>
        <dbReference type="ChEBI" id="CHEBI:29034"/>
    </ligand>
</feature>
<feature type="binding site" evidence="4">
    <location>
        <position position="269"/>
    </location>
    <ligand>
        <name>FAD</name>
        <dbReference type="ChEBI" id="CHEBI:57692"/>
    </ligand>
</feature>
<feature type="binding site" evidence="4">
    <location>
        <position position="290"/>
    </location>
    <ligand>
        <name>FAD</name>
        <dbReference type="ChEBI" id="CHEBI:57692"/>
    </ligand>
</feature>
<feature type="binding site" description="axial binding residue" evidence="1">
    <location>
        <position position="304"/>
    </location>
    <ligand>
        <name>heme b</name>
        <dbReference type="ChEBI" id="CHEBI:60344"/>
    </ligand>
    <ligandPart>
        <name>Fe</name>
        <dbReference type="ChEBI" id="CHEBI:18248"/>
    </ligandPart>
</feature>
<feature type="binding site" evidence="3">
    <location>
        <position position="307"/>
    </location>
    <ligand>
        <name>Fe(3+)</name>
        <dbReference type="ChEBI" id="CHEBI:29034"/>
    </ligand>
</feature>
<feature type="binding site" evidence="4">
    <location>
        <position position="366"/>
    </location>
    <ligand>
        <name>FAD</name>
        <dbReference type="ChEBI" id="CHEBI:57692"/>
    </ligand>
</feature>
<feature type="binding site" evidence="4">
    <location>
        <position position="383"/>
    </location>
    <ligand>
        <name>FAD</name>
        <dbReference type="ChEBI" id="CHEBI:57692"/>
    </ligand>
</feature>
<feature type="binding site" description="axial binding residue" evidence="1">
    <location>
        <position position="397"/>
    </location>
    <ligand>
        <name>heme b</name>
        <dbReference type="ChEBI" id="CHEBI:60344"/>
    </ligand>
    <ligandPart>
        <name>Fe</name>
        <dbReference type="ChEBI" id="CHEBI:18248"/>
    </ligandPart>
</feature>
<feature type="sequence conflict" description="In Ref. 2; AAK40270." evidence="13" ref="2">
    <original>L</original>
    <variation>M</variation>
    <location>
        <position position="36"/>
    </location>
</feature>
<feature type="sequence conflict" description="In Ref. 1; CAC41351." evidence="13" ref="1">
    <original>Y</original>
    <variation>C</variation>
    <location>
        <position position="95"/>
    </location>
</feature>
<feature type="sequence conflict" description="In Ref. 2; AAK40270." evidence="13" ref="2">
    <original>R</original>
    <variation>H</variation>
    <location>
        <position position="108"/>
    </location>
</feature>
<feature type="sequence conflict" description="In Ref. 2; AAK40270." evidence="13" ref="2">
    <original>G</original>
    <variation>E</variation>
    <location>
        <position position="127"/>
    </location>
</feature>
<feature type="sequence conflict" description="In Ref. 2; AAK40270." evidence="13" ref="2">
    <original>F</original>
    <variation>L</variation>
    <location>
        <position position="154"/>
    </location>
</feature>
<feature type="sequence conflict" description="In Ref. 1; CAC41351." evidence="13" ref="1">
    <original>Q</original>
    <variation>H</variation>
    <location>
        <position position="164"/>
    </location>
</feature>
<feature type="sequence conflict" description="In Ref. 1; CAC41351 and 2; AAK40270." evidence="13" ref="1 2">
    <original>V</original>
    <variation>I</variation>
    <location>
        <position position="212"/>
    </location>
</feature>
<feature type="sequence conflict" description="In Ref. 2; AAK40270." evidence="13" ref="2">
    <original>V</original>
    <variation>L</variation>
    <location>
        <position position="216"/>
    </location>
</feature>
<feature type="sequence conflict" description="In Ref. 2; AAK40270." evidence="13" ref="2">
    <original>V</original>
    <variation>M</variation>
    <location>
        <position position="228"/>
    </location>
</feature>
<feature type="sequence conflict" description="In Ref. 2; AAK40270." evidence="13" ref="2">
    <original>V</original>
    <variation>A</variation>
    <location>
        <position position="305"/>
    </location>
</feature>
<feature type="sequence conflict" description="In Ref. 2; AAK40270." evidence="13" ref="2">
    <original>N</original>
    <variation>K</variation>
    <location>
        <position position="323"/>
    </location>
</feature>
<feature type="sequence conflict" description="In Ref. 2; AAK40270." evidence="13" ref="2">
    <original>N</original>
    <variation>S</variation>
    <location>
        <position position="332"/>
    </location>
</feature>
<feature type="sequence conflict" description="In Ref. 2; AAK40270." evidence="13" ref="2">
    <original>L</original>
    <variation>V</variation>
    <location>
        <position position="362"/>
    </location>
</feature>
<feature type="sequence conflict" description="In Ref. 1; CAC41351." evidence="13" ref="1">
    <original>V</original>
    <variation>I</variation>
    <location>
        <position position="425"/>
    </location>
</feature>
<dbReference type="EC" id="1.16.1.-"/>
<dbReference type="EMBL" id="AJ319746">
    <property type="protein sequence ID" value="CAC41351.1"/>
    <property type="molecule type" value="mRNA"/>
</dbReference>
<dbReference type="EMBL" id="AY029778">
    <property type="protein sequence ID" value="AAK40270.1"/>
    <property type="status" value="ALT_FRAME"/>
    <property type="molecule type" value="mRNA"/>
</dbReference>
<dbReference type="EMBL" id="AK040760">
    <property type="protein sequence ID" value="BAC30696.1"/>
    <property type="molecule type" value="mRNA"/>
</dbReference>
<dbReference type="EMBL" id="BC006651">
    <property type="protein sequence ID" value="AAH06651.1"/>
    <property type="molecule type" value="mRNA"/>
</dbReference>
<dbReference type="CCDS" id="CCDS39008.1"/>
<dbReference type="RefSeq" id="NP_473439.2">
    <property type="nucleotide sequence ID" value="NM_054098.3"/>
</dbReference>
<dbReference type="SMR" id="Q923B6"/>
<dbReference type="FunCoup" id="Q923B6">
    <property type="interactions" value="715"/>
</dbReference>
<dbReference type="STRING" id="10090.ENSMUSP00000111081"/>
<dbReference type="GlyGen" id="Q923B6">
    <property type="glycosylation" value="1 site, 1 N-linked glycan (1 site)"/>
</dbReference>
<dbReference type="iPTMnet" id="Q923B6"/>
<dbReference type="PhosphoSitePlus" id="Q923B6"/>
<dbReference type="SwissPalm" id="Q923B6"/>
<dbReference type="jPOST" id="Q923B6"/>
<dbReference type="PaxDb" id="10090-ENSMUSP00000111081"/>
<dbReference type="ProteomicsDB" id="254587"/>
<dbReference type="Antibodypedia" id="29814">
    <property type="antibodies" value="286 antibodies from 35 providers"/>
</dbReference>
<dbReference type="Ensembl" id="ENSMUST00000115421.3">
    <property type="protein sequence ID" value="ENSMUSP00000111081.2"/>
    <property type="gene ID" value="ENSMUSG00000012428.10"/>
</dbReference>
<dbReference type="GeneID" id="117167"/>
<dbReference type="KEGG" id="mmu:117167"/>
<dbReference type="UCSC" id="uc008wjg.1">
    <property type="organism name" value="mouse"/>
</dbReference>
<dbReference type="AGR" id="MGI:1923560"/>
<dbReference type="CTD" id="79689"/>
<dbReference type="MGI" id="MGI:1923560">
    <property type="gene designation" value="Steap4"/>
</dbReference>
<dbReference type="VEuPathDB" id="HostDB:ENSMUSG00000012428"/>
<dbReference type="eggNOG" id="ENOG502R746">
    <property type="taxonomic scope" value="Eukaryota"/>
</dbReference>
<dbReference type="GeneTree" id="ENSGT00390000008042"/>
<dbReference type="HOGENOM" id="CLU_034618_1_1_1"/>
<dbReference type="InParanoid" id="Q923B6"/>
<dbReference type="OMA" id="GWERNPK"/>
<dbReference type="OrthoDB" id="550646at2759"/>
<dbReference type="PhylomeDB" id="Q923B6"/>
<dbReference type="TreeFam" id="TF332031"/>
<dbReference type="Reactome" id="R-MMU-917977">
    <property type="pathway name" value="Transferrin endocytosis and recycling"/>
</dbReference>
<dbReference type="BioGRID-ORCS" id="117167">
    <property type="hits" value="2 hits in 77 CRISPR screens"/>
</dbReference>
<dbReference type="ChiTaRS" id="Steap4">
    <property type="organism name" value="mouse"/>
</dbReference>
<dbReference type="PRO" id="PR:Q923B6"/>
<dbReference type="Proteomes" id="UP000000589">
    <property type="component" value="Chromosome 5"/>
</dbReference>
<dbReference type="RNAct" id="Q923B6">
    <property type="molecule type" value="protein"/>
</dbReference>
<dbReference type="Bgee" id="ENSMUSG00000012428">
    <property type="expression patterns" value="Expressed in epididymal fat pad and 130 other cell types or tissues"/>
</dbReference>
<dbReference type="GO" id="GO:0031901">
    <property type="term" value="C:early endosome membrane"/>
    <property type="evidence" value="ECO:0007669"/>
    <property type="project" value="UniProtKB-SubCell"/>
</dbReference>
<dbReference type="GO" id="GO:0005768">
    <property type="term" value="C:endosome"/>
    <property type="evidence" value="ECO:0000314"/>
    <property type="project" value="MGI"/>
</dbReference>
<dbReference type="GO" id="GO:0000139">
    <property type="term" value="C:Golgi membrane"/>
    <property type="evidence" value="ECO:0007669"/>
    <property type="project" value="UniProtKB-SubCell"/>
</dbReference>
<dbReference type="GO" id="GO:0005654">
    <property type="term" value="C:nucleoplasm"/>
    <property type="evidence" value="ECO:0007669"/>
    <property type="project" value="Ensembl"/>
</dbReference>
<dbReference type="GO" id="GO:0005886">
    <property type="term" value="C:plasma membrane"/>
    <property type="evidence" value="ECO:0000314"/>
    <property type="project" value="UniProtKB"/>
</dbReference>
<dbReference type="GO" id="GO:0008823">
    <property type="term" value="F:cupric reductase (NADH) activity"/>
    <property type="evidence" value="ECO:0000314"/>
    <property type="project" value="MGI"/>
</dbReference>
<dbReference type="GO" id="GO:0009055">
    <property type="term" value="F:electron transfer activity"/>
    <property type="evidence" value="ECO:0007669"/>
    <property type="project" value="Ensembl"/>
</dbReference>
<dbReference type="GO" id="GO:0071949">
    <property type="term" value="F:FAD binding"/>
    <property type="evidence" value="ECO:0007669"/>
    <property type="project" value="Ensembl"/>
</dbReference>
<dbReference type="GO" id="GO:0052851">
    <property type="term" value="F:ferric-chelate reductase (NADPH) activity"/>
    <property type="evidence" value="ECO:0000314"/>
    <property type="project" value="MGI"/>
</dbReference>
<dbReference type="GO" id="GO:0020037">
    <property type="term" value="F:heme binding"/>
    <property type="evidence" value="ECO:0007669"/>
    <property type="project" value="Ensembl"/>
</dbReference>
<dbReference type="GO" id="GO:0046872">
    <property type="term" value="F:metal ion binding"/>
    <property type="evidence" value="ECO:0007669"/>
    <property type="project" value="UniProtKB-KW"/>
</dbReference>
<dbReference type="GO" id="GO:0015677">
    <property type="term" value="P:copper ion import"/>
    <property type="evidence" value="ECO:0000314"/>
    <property type="project" value="MGI"/>
</dbReference>
<dbReference type="GO" id="GO:0045444">
    <property type="term" value="P:fat cell differentiation"/>
    <property type="evidence" value="ECO:0000270"/>
    <property type="project" value="UniProtKB"/>
</dbReference>
<dbReference type="GO" id="GO:0033212">
    <property type="term" value="P:iron import into cell"/>
    <property type="evidence" value="ECO:0000314"/>
    <property type="project" value="MGI"/>
</dbReference>
<dbReference type="GO" id="GO:0098706">
    <property type="term" value="P:iron ion import across cell outer membrane"/>
    <property type="evidence" value="ECO:0000314"/>
    <property type="project" value="MGI"/>
</dbReference>
<dbReference type="GO" id="GO:0070207">
    <property type="term" value="P:protein homotrimerization"/>
    <property type="evidence" value="ECO:0007669"/>
    <property type="project" value="Ensembl"/>
</dbReference>
<dbReference type="FunFam" id="3.40.50.720:FF:000051">
    <property type="entry name" value="STEAP2 metalloreductase"/>
    <property type="match status" value="1"/>
</dbReference>
<dbReference type="Gene3D" id="3.40.50.720">
    <property type="entry name" value="NAD(P)-binding Rossmann-like Domain"/>
    <property type="match status" value="1"/>
</dbReference>
<dbReference type="InterPro" id="IPR013130">
    <property type="entry name" value="Fe3_Rdtase_TM_dom"/>
</dbReference>
<dbReference type="InterPro" id="IPR036291">
    <property type="entry name" value="NAD(P)-bd_dom_sf"/>
</dbReference>
<dbReference type="InterPro" id="IPR028939">
    <property type="entry name" value="P5C_Rdtase_cat_N"/>
</dbReference>
<dbReference type="InterPro" id="IPR051267">
    <property type="entry name" value="STEAP_metalloreductase"/>
</dbReference>
<dbReference type="PANTHER" id="PTHR14239">
    <property type="entry name" value="DUDULIN-RELATED"/>
    <property type="match status" value="1"/>
</dbReference>
<dbReference type="PANTHER" id="PTHR14239:SF5">
    <property type="entry name" value="METALLOREDUCTASE STEAP4"/>
    <property type="match status" value="1"/>
</dbReference>
<dbReference type="Pfam" id="PF03807">
    <property type="entry name" value="F420_oxidored"/>
    <property type="match status" value="1"/>
</dbReference>
<dbReference type="Pfam" id="PF01794">
    <property type="entry name" value="Ferric_reduct"/>
    <property type="match status" value="1"/>
</dbReference>
<dbReference type="SUPFAM" id="SSF51735">
    <property type="entry name" value="NAD(P)-binding Rossmann-fold domains"/>
    <property type="match status" value="1"/>
</dbReference>
<proteinExistence type="evidence at protein level"/>
<accession>Q923B6</accession>
<accession>Q91W31</accession>
<accession>Q91ZE8</accession>
<gene>
    <name type="primary">Steap4</name>
    <name evidence="12" type="synonym">Tiarp</name>
</gene>
<keyword id="KW-1003">Cell membrane</keyword>
<keyword id="KW-0186">Copper</keyword>
<keyword id="KW-0967">Endosome</keyword>
<keyword id="KW-0274">FAD</keyword>
<keyword id="KW-0285">Flavoprotein</keyword>
<keyword id="KW-0333">Golgi apparatus</keyword>
<keyword id="KW-0349">Heme</keyword>
<keyword id="KW-0406">Ion transport</keyword>
<keyword id="KW-0408">Iron</keyword>
<keyword id="KW-0410">Iron transport</keyword>
<keyword id="KW-0472">Membrane</keyword>
<keyword id="KW-0479">Metal-binding</keyword>
<keyword id="KW-0521">NADP</keyword>
<keyword id="KW-0560">Oxidoreductase</keyword>
<keyword id="KW-1185">Reference proteome</keyword>
<keyword id="KW-0812">Transmembrane</keyword>
<keyword id="KW-1133">Transmembrane helix</keyword>
<keyword id="KW-0813">Transport</keyword>
<evidence type="ECO:0000250" key="1">
    <source>
        <dbReference type="UniProtKB" id="P32791"/>
    </source>
</evidence>
<evidence type="ECO:0000250" key="2">
    <source>
        <dbReference type="UniProtKB" id="Q4V8K1"/>
    </source>
</evidence>
<evidence type="ECO:0000250" key="3">
    <source>
        <dbReference type="UniProtKB" id="Q658P3"/>
    </source>
</evidence>
<evidence type="ECO:0000250" key="4">
    <source>
        <dbReference type="UniProtKB" id="Q687X5"/>
    </source>
</evidence>
<evidence type="ECO:0000255" key="5"/>
<evidence type="ECO:0000269" key="6">
    <source>
    </source>
</evidence>
<evidence type="ECO:0000269" key="7">
    <source>
    </source>
</evidence>
<evidence type="ECO:0000269" key="8">
    <source>
    </source>
</evidence>
<evidence type="ECO:0000269" key="9">
    <source>
    </source>
</evidence>
<evidence type="ECO:0000269" key="10">
    <source>
    </source>
</evidence>
<evidence type="ECO:0000269" key="11">
    <source>
    </source>
</evidence>
<evidence type="ECO:0000303" key="12">
    <source>
    </source>
</evidence>
<evidence type="ECO:0000305" key="13"/>
<evidence type="ECO:0000305" key="14">
    <source>
    </source>
</evidence>
<evidence type="ECO:0000305" key="15">
    <source>
    </source>
</evidence>
<reference key="1">
    <citation type="journal article" date="2001" name="J. Biol. Chem.">
        <title>Tumor necrosis factor-alpha-induced adipose-related protein (TIARP), a cell-surface protein that is highly induced by tumor necrosis factor-alpha and adipose conversion.</title>
        <authorList>
            <person name="Moldes M."/>
            <person name="Lasnier F."/>
            <person name="Gauthereau X."/>
            <person name="Klein C."/>
            <person name="Pairault J."/>
            <person name="Feve B."/>
            <person name="Chambaut-Guerin A.-M."/>
        </authorList>
    </citation>
    <scope>NUCLEOTIDE SEQUENCE [MRNA]</scope>
    <scope>SUBCELLULAR LOCATION</scope>
    <scope>INDUCTION BY TNFA</scope>
    <source>
        <strain>SWR/J</strain>
        <tissue>Adipose tissue</tissue>
    </source>
</reference>
<reference key="2">
    <citation type="submission" date="2001-04" db="EMBL/GenBank/DDBJ databases">
        <title>Molecular cloning and expression of two new members of the dudulin family.</title>
        <authorList>
            <person name="Serru V."/>
            <person name="Lamblin D."/>
            <person name="Manivet P."/>
            <person name="Pernet P."/>
            <person name="Vaubourdolle M."/>
            <person name="Kellermann O."/>
            <person name="Loric S."/>
        </authorList>
    </citation>
    <scope>NUCLEOTIDE SEQUENCE [MRNA]</scope>
</reference>
<reference key="3">
    <citation type="journal article" date="2005" name="Science">
        <title>The transcriptional landscape of the mammalian genome.</title>
        <authorList>
            <person name="Carninci P."/>
            <person name="Kasukawa T."/>
            <person name="Katayama S."/>
            <person name="Gough J."/>
            <person name="Frith M.C."/>
            <person name="Maeda N."/>
            <person name="Oyama R."/>
            <person name="Ravasi T."/>
            <person name="Lenhard B."/>
            <person name="Wells C."/>
            <person name="Kodzius R."/>
            <person name="Shimokawa K."/>
            <person name="Bajic V.B."/>
            <person name="Brenner S.E."/>
            <person name="Batalov S."/>
            <person name="Forrest A.R."/>
            <person name="Zavolan M."/>
            <person name="Davis M.J."/>
            <person name="Wilming L.G."/>
            <person name="Aidinis V."/>
            <person name="Allen J.E."/>
            <person name="Ambesi-Impiombato A."/>
            <person name="Apweiler R."/>
            <person name="Aturaliya R.N."/>
            <person name="Bailey T.L."/>
            <person name="Bansal M."/>
            <person name="Baxter L."/>
            <person name="Beisel K.W."/>
            <person name="Bersano T."/>
            <person name="Bono H."/>
            <person name="Chalk A.M."/>
            <person name="Chiu K.P."/>
            <person name="Choudhary V."/>
            <person name="Christoffels A."/>
            <person name="Clutterbuck D.R."/>
            <person name="Crowe M.L."/>
            <person name="Dalla E."/>
            <person name="Dalrymple B.P."/>
            <person name="de Bono B."/>
            <person name="Della Gatta G."/>
            <person name="di Bernardo D."/>
            <person name="Down T."/>
            <person name="Engstrom P."/>
            <person name="Fagiolini M."/>
            <person name="Faulkner G."/>
            <person name="Fletcher C.F."/>
            <person name="Fukushima T."/>
            <person name="Furuno M."/>
            <person name="Futaki S."/>
            <person name="Gariboldi M."/>
            <person name="Georgii-Hemming P."/>
            <person name="Gingeras T.R."/>
            <person name="Gojobori T."/>
            <person name="Green R.E."/>
            <person name="Gustincich S."/>
            <person name="Harbers M."/>
            <person name="Hayashi Y."/>
            <person name="Hensch T.K."/>
            <person name="Hirokawa N."/>
            <person name="Hill D."/>
            <person name="Huminiecki L."/>
            <person name="Iacono M."/>
            <person name="Ikeo K."/>
            <person name="Iwama A."/>
            <person name="Ishikawa T."/>
            <person name="Jakt M."/>
            <person name="Kanapin A."/>
            <person name="Katoh M."/>
            <person name="Kawasawa Y."/>
            <person name="Kelso J."/>
            <person name="Kitamura H."/>
            <person name="Kitano H."/>
            <person name="Kollias G."/>
            <person name="Krishnan S.P."/>
            <person name="Kruger A."/>
            <person name="Kummerfeld S.K."/>
            <person name="Kurochkin I.V."/>
            <person name="Lareau L.F."/>
            <person name="Lazarevic D."/>
            <person name="Lipovich L."/>
            <person name="Liu J."/>
            <person name="Liuni S."/>
            <person name="McWilliam S."/>
            <person name="Madan Babu M."/>
            <person name="Madera M."/>
            <person name="Marchionni L."/>
            <person name="Matsuda H."/>
            <person name="Matsuzawa S."/>
            <person name="Miki H."/>
            <person name="Mignone F."/>
            <person name="Miyake S."/>
            <person name="Morris K."/>
            <person name="Mottagui-Tabar S."/>
            <person name="Mulder N."/>
            <person name="Nakano N."/>
            <person name="Nakauchi H."/>
            <person name="Ng P."/>
            <person name="Nilsson R."/>
            <person name="Nishiguchi S."/>
            <person name="Nishikawa S."/>
            <person name="Nori F."/>
            <person name="Ohara O."/>
            <person name="Okazaki Y."/>
            <person name="Orlando V."/>
            <person name="Pang K.C."/>
            <person name="Pavan W.J."/>
            <person name="Pavesi G."/>
            <person name="Pesole G."/>
            <person name="Petrovsky N."/>
            <person name="Piazza S."/>
            <person name="Reed J."/>
            <person name="Reid J.F."/>
            <person name="Ring B.Z."/>
            <person name="Ringwald M."/>
            <person name="Rost B."/>
            <person name="Ruan Y."/>
            <person name="Salzberg S.L."/>
            <person name="Sandelin A."/>
            <person name="Schneider C."/>
            <person name="Schoenbach C."/>
            <person name="Sekiguchi K."/>
            <person name="Semple C.A."/>
            <person name="Seno S."/>
            <person name="Sessa L."/>
            <person name="Sheng Y."/>
            <person name="Shibata Y."/>
            <person name="Shimada H."/>
            <person name="Shimada K."/>
            <person name="Silva D."/>
            <person name="Sinclair B."/>
            <person name="Sperling S."/>
            <person name="Stupka E."/>
            <person name="Sugiura K."/>
            <person name="Sultana R."/>
            <person name="Takenaka Y."/>
            <person name="Taki K."/>
            <person name="Tammoja K."/>
            <person name="Tan S.L."/>
            <person name="Tang S."/>
            <person name="Taylor M.S."/>
            <person name="Tegner J."/>
            <person name="Teichmann S.A."/>
            <person name="Ueda H.R."/>
            <person name="van Nimwegen E."/>
            <person name="Verardo R."/>
            <person name="Wei C.L."/>
            <person name="Yagi K."/>
            <person name="Yamanishi H."/>
            <person name="Zabarovsky E."/>
            <person name="Zhu S."/>
            <person name="Zimmer A."/>
            <person name="Hide W."/>
            <person name="Bult C."/>
            <person name="Grimmond S.M."/>
            <person name="Teasdale R.D."/>
            <person name="Liu E.T."/>
            <person name="Brusic V."/>
            <person name="Quackenbush J."/>
            <person name="Wahlestedt C."/>
            <person name="Mattick J.S."/>
            <person name="Hume D.A."/>
            <person name="Kai C."/>
            <person name="Sasaki D."/>
            <person name="Tomaru Y."/>
            <person name="Fukuda S."/>
            <person name="Kanamori-Katayama M."/>
            <person name="Suzuki M."/>
            <person name="Aoki J."/>
            <person name="Arakawa T."/>
            <person name="Iida J."/>
            <person name="Imamura K."/>
            <person name="Itoh M."/>
            <person name="Kato T."/>
            <person name="Kawaji H."/>
            <person name="Kawagashira N."/>
            <person name="Kawashima T."/>
            <person name="Kojima M."/>
            <person name="Kondo S."/>
            <person name="Konno H."/>
            <person name="Nakano K."/>
            <person name="Ninomiya N."/>
            <person name="Nishio T."/>
            <person name="Okada M."/>
            <person name="Plessy C."/>
            <person name="Shibata K."/>
            <person name="Shiraki T."/>
            <person name="Suzuki S."/>
            <person name="Tagami M."/>
            <person name="Waki K."/>
            <person name="Watahiki A."/>
            <person name="Okamura-Oho Y."/>
            <person name="Suzuki H."/>
            <person name="Kawai J."/>
            <person name="Hayashizaki Y."/>
        </authorList>
    </citation>
    <scope>NUCLEOTIDE SEQUENCE [LARGE SCALE MRNA]</scope>
    <source>
        <strain>C57BL/6J</strain>
        <tissue>Aorta</tissue>
        <tissue>Vein</tissue>
    </source>
</reference>
<reference key="4">
    <citation type="journal article" date="2004" name="Genome Res.">
        <title>The status, quality, and expansion of the NIH full-length cDNA project: the Mammalian Gene Collection (MGC).</title>
        <authorList>
            <consortium name="The MGC Project Team"/>
        </authorList>
    </citation>
    <scope>NUCLEOTIDE SEQUENCE [LARGE SCALE MRNA]</scope>
    <source>
        <strain>FVB/N</strain>
        <tissue>Mammary tumor</tissue>
    </source>
</reference>
<reference key="5">
    <citation type="journal article" date="2004" name="FEBS Lett.">
        <title>Interleukin-6 is a positive regulator of tumor necrosis factor alpha-induced adipose-related protein in 3T3-L1 adipocytes.</title>
        <authorList>
            <person name="Fasshauer M."/>
            <person name="Kralisch S."/>
            <person name="Klier M."/>
            <person name="Lossner U."/>
            <person name="Bluher M."/>
            <person name="Chambaut-Guerin A.-M."/>
            <person name="Klein J."/>
            <person name="Paschke R."/>
        </authorList>
    </citation>
    <scope>INDUCTION BY IL6</scope>
    <scope>TISSUE SPECIFICITY</scope>
</reference>
<reference key="6">
    <citation type="journal article" date="2006" name="Blood">
        <title>The Steap proteins are metalloreductases.</title>
        <authorList>
            <person name="Ohgami R.S."/>
            <person name="Campagna D.R."/>
            <person name="McDonald A."/>
            <person name="Fleming M.D."/>
        </authorList>
    </citation>
    <scope>FUNCTION</scope>
    <scope>CATALYTIC ACTIVITY</scope>
    <scope>SUBCELLULAR LOCATION</scope>
</reference>
<reference key="7">
    <citation type="journal article" date="2007" name="Cell">
        <title>Coordinated regulation of nutrient and inflammatory responses by STAMP2 is essential for metabolic homeostasis.</title>
        <authorList>
            <person name="Wellen K.E."/>
            <person name="Fucho R."/>
            <person name="Gregor M.F."/>
            <person name="Furuhashi M."/>
            <person name="Morgan C."/>
            <person name="Lindstad T."/>
            <person name="Vaillancourt E."/>
            <person name="Gorgun C.Z."/>
            <person name="Saatcioglu F."/>
            <person name="Hotamisligil G.S."/>
        </authorList>
    </citation>
    <scope>FUNCTION</scope>
    <scope>INDUCTION BY TNFA</scope>
    <scope>DISRUPTION PHENOTYPE</scope>
</reference>
<reference key="8">
    <citation type="journal article" date="2009" name="Arthritis Res. Ther.">
        <title>Tumor necrosis factor alpha-induced adipose-related protein expression in experimental arthritis and in rheumatoid arthritis.</title>
        <authorList>
            <person name="Inoue A."/>
            <person name="Matsumoto I."/>
            <person name="Tanaka Y."/>
            <person name="Iwanami K."/>
            <person name="Kanamori A."/>
            <person name="Ochiai N."/>
            <person name="Goto D."/>
            <person name="Ito S."/>
            <person name="Sumida T."/>
        </authorList>
    </citation>
    <scope>FUNCTION</scope>
    <scope>INDUCTION BY TNFA</scope>
    <scope>TISSUE SPECIFICITY</scope>
</reference>
<reference key="9">
    <citation type="journal article" date="2009" name="FEBS Lett.">
        <title>Interleukin-1beta is a positive regulator of TIARP/STAMP2 gene and protein expression in adipocytes in vitro.</title>
        <authorList>
            <person name="Kralisch S."/>
            <person name="Sommer G."/>
            <person name="Weise S."/>
            <person name="Lipfert J."/>
            <person name="Lossner U."/>
            <person name="Kamprad M."/>
            <person name="Schrock K."/>
            <person name="Bluher M."/>
            <person name="Stumvoll M."/>
            <person name="Fasshauer M."/>
        </authorList>
    </citation>
    <scope>INDUCTION BY IL1B</scope>
</reference>
<reference key="10">
    <citation type="journal article" date="2010" name="Cell">
        <title>A tissue-specific atlas of mouse protein phosphorylation and expression.</title>
        <authorList>
            <person name="Huttlin E.L."/>
            <person name="Jedrychowski M.P."/>
            <person name="Elias J.E."/>
            <person name="Goswami T."/>
            <person name="Rad R."/>
            <person name="Beausoleil S.A."/>
            <person name="Villen J."/>
            <person name="Haas W."/>
            <person name="Sowa M.E."/>
            <person name="Gygi S.P."/>
        </authorList>
    </citation>
    <scope>IDENTIFICATION BY MASS SPECTROMETRY [LARGE SCALE ANALYSIS]</scope>
    <source>
        <tissue>Brown adipose tissue</tissue>
        <tissue>Heart</tissue>
        <tissue>Liver</tissue>
    </source>
</reference>